<accession>P05166</accession>
<accession>B7Z2Z4</accession>
<accession>Q16813</accession>
<accession>Q96CX0</accession>
<keyword id="KW-0002">3D-structure</keyword>
<keyword id="KW-0007">Acetylation</keyword>
<keyword id="KW-0025">Alternative splicing</keyword>
<keyword id="KW-0067">ATP-binding</keyword>
<keyword id="KW-0903">Direct protein sequencing</keyword>
<keyword id="KW-0225">Disease variant</keyword>
<keyword id="KW-0436">Ligase</keyword>
<keyword id="KW-0496">Mitochondrion</keyword>
<keyword id="KW-0547">Nucleotide-binding</keyword>
<keyword id="KW-0597">Phosphoprotein</keyword>
<keyword id="KW-1267">Proteomics identification</keyword>
<keyword id="KW-1185">Reference proteome</keyword>
<keyword id="KW-0809">Transit peptide</keyword>
<feature type="transit peptide" description="Mitochondrion" evidence="14">
    <location>
        <begin position="1"/>
        <end position="28"/>
    </location>
</feature>
<feature type="chain" id="PRO_0000000293" description="Propionyl-CoA carboxylase beta chain, mitochondrial">
    <location>
        <begin position="29"/>
        <end position="539"/>
    </location>
</feature>
<feature type="domain" description="CoA carboxyltransferase N-terminal" evidence="5">
    <location>
        <begin position="32"/>
        <end position="290"/>
    </location>
</feature>
<feature type="domain" description="CoA carboxyltransferase C-terminal" evidence="6">
    <location>
        <begin position="294"/>
        <end position="533"/>
    </location>
</feature>
<feature type="region of interest" description="Carboxyltransferase" evidence="7">
    <location>
        <begin position="32"/>
        <end position="533"/>
    </location>
</feature>
<feature type="region of interest" description="Acyl-CoA binding" evidence="4">
    <location>
        <begin position="325"/>
        <end position="358"/>
    </location>
</feature>
<feature type="modified residue" description="Phosphoserine" evidence="27">
    <location>
        <position position="71"/>
    </location>
</feature>
<feature type="modified residue" description="N6-acetyllysine; alternate" evidence="3">
    <location>
        <position position="99"/>
    </location>
</feature>
<feature type="modified residue" description="N6-succinyllysine; alternate" evidence="3">
    <location>
        <position position="99"/>
    </location>
</feature>
<feature type="modified residue" description="N6-succinyllysine" evidence="3">
    <location>
        <position position="248"/>
    </location>
</feature>
<feature type="modified residue" description="N6-acetyllysine; alternate" evidence="3">
    <location>
        <position position="474"/>
    </location>
</feature>
<feature type="modified residue" description="N6-succinyllysine; alternate" evidence="3">
    <location>
        <position position="474"/>
    </location>
</feature>
<feature type="modified residue" description="N6-acetyllysine; alternate" evidence="3">
    <location>
        <position position="489"/>
    </location>
</feature>
<feature type="modified residue" description="N6-succinyllysine; alternate" evidence="3">
    <location>
        <position position="489"/>
    </location>
</feature>
<feature type="splice variant" id="VSP_042568" description="In isoform 2." evidence="22">
    <original>Q</original>
    <variation>QQIIGWAQWLPLVISALWEAE</variation>
    <location>
        <position position="124"/>
    </location>
</feature>
<feature type="sequence variant" id="VAR_009080" description="In PA-2; likely benign; dbSNP:rs200185747." evidence="8">
    <original>L</original>
    <variation>M</variation>
    <location>
        <position position="17"/>
    </location>
</feature>
<feature type="sequence variant" id="VAR_000271" description="In PA-2." evidence="21">
    <original>R</original>
    <variation>P</variation>
    <location>
        <position position="44"/>
    </location>
</feature>
<feature type="sequence variant" id="VAR_023847" description="In PA-2; dbSNP:rs747053913." evidence="11">
    <original>R</original>
    <variation>S</variation>
    <location>
        <position position="67"/>
    </location>
</feature>
<feature type="sequence variant" id="VAR_000272" description="In PA-2." evidence="21">
    <original>S</original>
    <variation>R</variation>
    <location>
        <position position="106"/>
    </location>
</feature>
<feature type="sequence variant" id="VAR_023848" description="In PA-2; dbSNP:rs1553774114." evidence="11">
    <original>V</original>
    <variation>M</variation>
    <location>
        <position position="107"/>
    </location>
</feature>
<feature type="sequence variant" id="VAR_023849" description="In PA-2; dbSNP:rs202247818." evidence="11">
    <original>G</original>
    <variation>D</variation>
    <location>
        <position position="112"/>
    </location>
</feature>
<feature type="sequence variant" id="VAR_000273" description="In PA-2." evidence="21">
    <original>G</original>
    <variation>R</variation>
    <location>
        <position position="131"/>
    </location>
</feature>
<feature type="sequence variant" id="VAR_009081" description="In PA-2." evidence="18">
    <original>K</original>
    <variation>KICK</variation>
    <location>
        <position position="140"/>
    </location>
</feature>
<feature type="sequence variant" id="VAR_023850" description="In PA-2; dbSNP:rs202247819." evidence="12">
    <original>A</original>
    <variation>P</variation>
    <location>
        <position position="153"/>
    </location>
</feature>
<feature type="sequence variant" id="VAR_023851" description="In PA-2; does not affect either heteromeric or homomeric assembly; dbSNP:rs1304714042." evidence="9 11">
    <original>R</original>
    <variation>Q</variation>
    <location>
        <position position="165"/>
    </location>
</feature>
<feature type="sequence variant" id="VAR_000274" description="In PA-2; no effect on affinity for propionyl-CoA; decreased reaction kinetics for the propionyl-CoA carboxylase activity; decreased thermostability affecting holoenzyme oligomerization; dbSNP:rs879253815." evidence="12 13 21">
    <original>R</original>
    <variation>W</variation>
    <location>
        <position position="165"/>
    </location>
</feature>
<feature type="sequence variant" id="VAR_000275" description="In PA-2; no effect on affinity for propionyl-CoA; decreased reaction kinetics for the propionyl-CoA carboxylase activity; decreased thermostability affecting holoenzyme oligomerization; dbSNP:rs121964960." evidence="8 11 13 21">
    <original>E</original>
    <variation>K</variation>
    <location>
        <position position="168"/>
    </location>
</feature>
<feature type="sequence variant" id="VAR_023852" description="In PA-2; dbSNP:rs746102997." evidence="11">
    <original>G</original>
    <variation>R</variation>
    <location>
        <position position="188"/>
    </location>
</feature>
<feature type="sequence variant" id="VAR_000276" description="In PA-2; dbSNP:rs762354873." evidence="21">
    <original>G</original>
    <variation>D</variation>
    <location>
        <position position="198"/>
    </location>
</feature>
<feature type="sequence variant" id="VAR_009082" description="In PA-2; dbSNP:rs1303129574." evidence="8">
    <original>V</original>
    <variation>D</variation>
    <location>
        <position position="205"/>
    </location>
</feature>
<feature type="sequence variant" id="VAR_009083" description="In PA-2; dbSNP:rs374722096." evidence="18">
    <original>P</original>
    <variation>L</variation>
    <location>
        <position position="228"/>
    </location>
</feature>
<feature type="sequence variant" id="VAR_023853" description="In PA-2; dbSNP:rs2108197348." evidence="11">
    <original>G</original>
    <variation>V</variation>
    <location>
        <position position="246"/>
    </location>
</feature>
<feature type="sequence variant" id="VAR_048163" description="In dbSNP:rs2228310." evidence="19">
    <original>P</original>
    <variation>S</variation>
    <location>
        <position position="287"/>
    </location>
</feature>
<feature type="sequence variant" id="VAR_023854" description="In PA-2." evidence="11">
    <location>
        <position position="341"/>
    </location>
</feature>
<feature type="sequence variant" id="VAR_000277" description="In PA-2." evidence="16 20">
    <location>
        <position position="408"/>
    </location>
</feature>
<feature type="sequence variant" id="VAR_000278" description="In PA-2; no effect on affinity for propionyl-CoA; decreased reaction kinetics for the propionyl-CoA carboxylase activity; decreased thermostability affecting holoenzyme oligomerization; dbSNP:rs121964959." evidence="11 12 13 20 21">
    <original>R</original>
    <variation>W</variation>
    <location>
        <position position="410"/>
    </location>
</feature>
<feature type="sequence variant" id="VAR_009084" description="In PA-2; dbSNP:rs111033542." evidence="10 12">
    <original>T</original>
    <variation>I</variation>
    <location>
        <position position="428"/>
    </location>
</feature>
<feature type="sequence variant" id="VAR_023855" description="In PA-2; dbSNP:rs1935354676." evidence="10">
    <original>I</original>
    <variation>L</variation>
    <location>
        <position position="430"/>
    </location>
</feature>
<feature type="sequence variant" id="VAR_023856" description="In PA-2; dbSNP:rs121964961." evidence="10">
    <original>Y</original>
    <variation>C</variation>
    <location>
        <position position="435"/>
    </location>
</feature>
<feature type="sequence variant" id="VAR_023857" description="In PA-2; dbSNP:rs769521436." evidence="10">
    <original>Y</original>
    <variation>C</variation>
    <location>
        <position position="439"/>
    </location>
</feature>
<feature type="sequence variant" id="VAR_009085" description="In PA-2; dbSNP:rs1935373960." evidence="8">
    <original>M</original>
    <variation>T</variation>
    <location>
        <position position="442"/>
    </location>
</feature>
<feature type="sequence variant" id="VAR_023858" description="In PA-2; dbSNP:rs775563122." evidence="10">
    <original>A</original>
    <variation>T</variation>
    <location>
        <position position="468"/>
    </location>
</feature>
<feature type="sequence variant" id="VAR_000279" description="In PA-2; does not affect either heteromeric or homomeric assembly; decreased thermostability affecting holoenzyme oligomerization; no effect on propionyl-CoA carboxylase activity; dbSNP:rs142403318." evidence="9 21">
    <original>A</original>
    <variation>V</variation>
    <location>
        <position position="497"/>
    </location>
</feature>
<feature type="sequence variant" id="VAR_000280" description="In PA-2; affects heteromeric and homomeric assembly; dbSNP:rs186710233." evidence="9 12 21">
    <original>R</original>
    <variation>C</variation>
    <location>
        <position position="512"/>
    </location>
</feature>
<feature type="sequence variant" id="VAR_000281" description="In PA-2; affects heteromeric and homomeric assembly; dbSNP:rs202247822." evidence="9 21">
    <original>L</original>
    <variation>P</variation>
    <location>
        <position position="519"/>
    </location>
</feature>
<feature type="sequence variant" id="VAR_009086" description="In PA-2; affects heteromeric and homomeric assembly; dbSNP:rs202247823." evidence="9">
    <original>N</original>
    <variation>D</variation>
    <location>
        <position position="536"/>
    </location>
</feature>
<feature type="sequence conflict" description="In Ref. 2; AAB28900." evidence="23" ref="2">
    <original>QH</original>
    <variation>HD</variation>
    <location>
        <begin position="58"/>
        <end position="59"/>
    </location>
</feature>
<feature type="helix" evidence="28">
    <location>
        <begin position="35"/>
        <end position="47"/>
    </location>
</feature>
<feature type="turn" evidence="28">
    <location>
        <begin position="48"/>
        <end position="50"/>
    </location>
</feature>
<feature type="helix" evidence="28">
    <location>
        <begin position="52"/>
        <end position="60"/>
    </location>
</feature>
<feature type="helix" evidence="28">
    <location>
        <begin position="66"/>
        <end position="73"/>
    </location>
</feature>
<feature type="strand" evidence="28">
    <location>
        <begin position="80"/>
        <end position="82"/>
    </location>
</feature>
<feature type="turn" evidence="28">
    <location>
        <begin position="93"/>
        <end position="96"/>
    </location>
</feature>
<feature type="helix" evidence="28">
    <location>
        <begin position="98"/>
        <end position="100"/>
    </location>
</feature>
<feature type="strand" evidence="28">
    <location>
        <begin position="106"/>
        <end position="114"/>
    </location>
</feature>
<feature type="strand" evidence="28">
    <location>
        <begin position="117"/>
        <end position="124"/>
    </location>
</feature>
<feature type="turn" evidence="29">
    <location>
        <begin position="126"/>
        <end position="128"/>
    </location>
</feature>
<feature type="helix" evidence="28">
    <location>
        <begin position="129"/>
        <end position="131"/>
    </location>
</feature>
<feature type="helix" evidence="28">
    <location>
        <begin position="135"/>
        <end position="151"/>
    </location>
</feature>
<feature type="strand" evidence="28">
    <location>
        <begin position="155"/>
        <end position="161"/>
    </location>
</feature>
<feature type="helix" evidence="28">
    <location>
        <begin position="166"/>
        <end position="169"/>
    </location>
</feature>
<feature type="helix" evidence="28">
    <location>
        <begin position="170"/>
        <end position="186"/>
    </location>
</feature>
<feature type="turn" evidence="28">
    <location>
        <begin position="187"/>
        <end position="189"/>
    </location>
</feature>
<feature type="strand" evidence="28">
    <location>
        <begin position="192"/>
        <end position="201"/>
    </location>
</feature>
<feature type="helix" evidence="28">
    <location>
        <begin position="202"/>
        <end position="205"/>
    </location>
</feature>
<feature type="helix" evidence="28">
    <location>
        <begin position="206"/>
        <end position="210"/>
    </location>
</feature>
<feature type="strand" evidence="28">
    <location>
        <begin position="211"/>
        <end position="217"/>
    </location>
</feature>
<feature type="turn" evidence="28">
    <location>
        <begin position="218"/>
        <end position="220"/>
    </location>
</feature>
<feature type="strand" evidence="28">
    <location>
        <begin position="222"/>
        <end position="226"/>
    </location>
</feature>
<feature type="helix" evidence="28">
    <location>
        <begin position="228"/>
        <end position="235"/>
    </location>
</feature>
<feature type="helix" evidence="28">
    <location>
        <begin position="241"/>
        <end position="245"/>
    </location>
</feature>
<feature type="helix" evidence="28">
    <location>
        <begin position="247"/>
        <end position="252"/>
    </location>
</feature>
<feature type="strand" evidence="28">
    <location>
        <begin position="258"/>
        <end position="263"/>
    </location>
</feature>
<feature type="helix" evidence="28">
    <location>
        <begin position="264"/>
        <end position="275"/>
    </location>
</feature>
<feature type="helix" evidence="28">
    <location>
        <begin position="300"/>
        <end position="304"/>
    </location>
</feature>
<feature type="helix" evidence="28">
    <location>
        <begin position="316"/>
        <end position="323"/>
    </location>
</feature>
<feature type="helix" evidence="28">
    <location>
        <begin position="325"/>
        <end position="327"/>
    </location>
</feature>
<feature type="strand" evidence="28">
    <location>
        <begin position="330"/>
        <end position="333"/>
    </location>
</feature>
<feature type="strand" evidence="28">
    <location>
        <begin position="340"/>
        <end position="347"/>
    </location>
</feature>
<feature type="strand" evidence="28">
    <location>
        <begin position="350"/>
        <end position="357"/>
    </location>
</feature>
<feature type="turn" evidence="28">
    <location>
        <begin position="359"/>
        <end position="361"/>
    </location>
</feature>
<feature type="helix" evidence="28">
    <location>
        <begin position="362"/>
        <end position="364"/>
    </location>
</feature>
<feature type="helix" evidence="28">
    <location>
        <begin position="368"/>
        <end position="383"/>
    </location>
</feature>
<feature type="strand" evidence="28">
    <location>
        <begin position="388"/>
        <end position="394"/>
    </location>
</feature>
<feature type="helix" evidence="28">
    <location>
        <begin position="401"/>
        <end position="405"/>
    </location>
</feature>
<feature type="helix" evidence="28">
    <location>
        <begin position="408"/>
        <end position="421"/>
    </location>
</feature>
<feature type="strand" evidence="28">
    <location>
        <begin position="426"/>
        <end position="435"/>
    </location>
</feature>
<feature type="helix" evidence="28">
    <location>
        <begin position="437"/>
        <end position="441"/>
    </location>
</feature>
<feature type="helix" evidence="28">
    <location>
        <begin position="445"/>
        <end position="447"/>
    </location>
</feature>
<feature type="strand" evidence="28">
    <location>
        <begin position="450"/>
        <end position="454"/>
    </location>
</feature>
<feature type="strand" evidence="28">
    <location>
        <begin position="459"/>
        <end position="463"/>
    </location>
</feature>
<feature type="helix" evidence="28">
    <location>
        <begin position="465"/>
        <end position="473"/>
    </location>
</feature>
<feature type="helix" evidence="28">
    <location>
        <begin position="479"/>
        <end position="490"/>
    </location>
</feature>
<feature type="strand" evidence="28">
    <location>
        <begin position="491"/>
        <end position="493"/>
    </location>
</feature>
<feature type="helix" evidence="28">
    <location>
        <begin position="494"/>
        <end position="499"/>
    </location>
</feature>
<feature type="strand" evidence="28">
    <location>
        <begin position="501"/>
        <end position="505"/>
    </location>
</feature>
<feature type="helix" evidence="28">
    <location>
        <begin position="508"/>
        <end position="510"/>
    </location>
</feature>
<feature type="helix" evidence="28">
    <location>
        <begin position="511"/>
        <end position="521"/>
    </location>
</feature>
<feature type="helix" evidence="28">
    <location>
        <begin position="522"/>
        <end position="524"/>
    </location>
</feature>
<protein>
    <recommendedName>
        <fullName evidence="25">Propionyl-CoA carboxylase beta chain, mitochondrial</fullName>
        <shortName>PCCase subunit beta</shortName>
        <ecNumber evidence="13 17">6.4.1.3</ecNumber>
    </recommendedName>
    <alternativeName>
        <fullName>Propanoyl-CoA:carbon dioxide ligase subunit beta</fullName>
    </alternativeName>
</protein>
<name>PCCB_HUMAN</name>
<proteinExistence type="evidence at protein level"/>
<dbReference type="EC" id="6.4.1.3" evidence="13 17"/>
<dbReference type="EMBL" id="X73424">
    <property type="protein sequence ID" value="CAA51825.1"/>
    <property type="molecule type" value="mRNA"/>
</dbReference>
<dbReference type="EMBL" id="S67325">
    <property type="protein sequence ID" value="AAB28900.1"/>
    <property type="molecule type" value="mRNA"/>
</dbReference>
<dbReference type="EMBL" id="AJ006487">
    <property type="protein sequence ID" value="CAA07066.1"/>
    <property type="molecule type" value="Genomic_DNA"/>
</dbReference>
<dbReference type="EMBL" id="AJ006488">
    <property type="protein sequence ID" value="CAA07066.1"/>
    <property type="status" value="JOINED"/>
    <property type="molecule type" value="Genomic_DNA"/>
</dbReference>
<dbReference type="EMBL" id="AJ006489">
    <property type="protein sequence ID" value="CAA07066.1"/>
    <property type="status" value="JOINED"/>
    <property type="molecule type" value="Genomic_DNA"/>
</dbReference>
<dbReference type="EMBL" id="AJ006490">
    <property type="protein sequence ID" value="CAA07066.1"/>
    <property type="status" value="JOINED"/>
    <property type="molecule type" value="Genomic_DNA"/>
</dbReference>
<dbReference type="EMBL" id="AJ006491">
    <property type="protein sequence ID" value="CAA07066.1"/>
    <property type="status" value="JOINED"/>
    <property type="molecule type" value="Genomic_DNA"/>
</dbReference>
<dbReference type="EMBL" id="AJ006492">
    <property type="protein sequence ID" value="CAA07066.1"/>
    <property type="status" value="JOINED"/>
    <property type="molecule type" value="Genomic_DNA"/>
</dbReference>
<dbReference type="EMBL" id="AJ006493">
    <property type="protein sequence ID" value="CAA07066.1"/>
    <property type="status" value="JOINED"/>
    <property type="molecule type" value="Genomic_DNA"/>
</dbReference>
<dbReference type="EMBL" id="AJ006494">
    <property type="protein sequence ID" value="CAA07066.1"/>
    <property type="status" value="JOINED"/>
    <property type="molecule type" value="Genomic_DNA"/>
</dbReference>
<dbReference type="EMBL" id="AJ006495">
    <property type="protein sequence ID" value="CAA07066.1"/>
    <property type="status" value="JOINED"/>
    <property type="molecule type" value="Genomic_DNA"/>
</dbReference>
<dbReference type="EMBL" id="AJ006496">
    <property type="protein sequence ID" value="CAA07066.1"/>
    <property type="status" value="JOINED"/>
    <property type="molecule type" value="Genomic_DNA"/>
</dbReference>
<dbReference type="EMBL" id="AJ006497">
    <property type="protein sequence ID" value="CAA07066.1"/>
    <property type="status" value="JOINED"/>
    <property type="molecule type" value="Genomic_DNA"/>
</dbReference>
<dbReference type="EMBL" id="AJ006498">
    <property type="protein sequence ID" value="CAA07066.1"/>
    <property type="status" value="JOINED"/>
    <property type="molecule type" value="Genomic_DNA"/>
</dbReference>
<dbReference type="EMBL" id="AJ006499">
    <property type="protein sequence ID" value="CAA07066.1"/>
    <property type="status" value="JOINED"/>
    <property type="molecule type" value="Genomic_DNA"/>
</dbReference>
<dbReference type="EMBL" id="AK295312">
    <property type="protein sequence ID" value="BAH12030.1"/>
    <property type="molecule type" value="mRNA"/>
</dbReference>
<dbReference type="EMBL" id="AC069524">
    <property type="status" value="NOT_ANNOTATED_CDS"/>
    <property type="molecule type" value="Genomic_DNA"/>
</dbReference>
<dbReference type="EMBL" id="CH471052">
    <property type="protein sequence ID" value="EAW79118.1"/>
    <property type="molecule type" value="Genomic_DNA"/>
</dbReference>
<dbReference type="EMBL" id="BC013768">
    <property type="protein sequence ID" value="AAH13768.1"/>
    <property type="molecule type" value="mRNA"/>
</dbReference>
<dbReference type="EMBL" id="BC053661">
    <property type="protein sequence ID" value="AAH53661.1"/>
    <property type="molecule type" value="mRNA"/>
</dbReference>
<dbReference type="EMBL" id="M13573">
    <property type="protein sequence ID" value="AAA60036.1"/>
    <property type="molecule type" value="mRNA"/>
</dbReference>
<dbReference type="EMBL" id="M31167">
    <property type="protein sequence ID" value="AAA60037.1"/>
    <property type="molecule type" value="Genomic_DNA"/>
</dbReference>
<dbReference type="EMBL" id="M31169">
    <property type="protein sequence ID" value="AAA60038.1"/>
    <property type="molecule type" value="Genomic_DNA"/>
</dbReference>
<dbReference type="CCDS" id="CCDS3089.1">
    <molecule id="P05166-1"/>
</dbReference>
<dbReference type="CCDS" id="CCDS54643.1">
    <molecule id="P05166-2"/>
</dbReference>
<dbReference type="PIR" id="T45009">
    <property type="entry name" value="T45009"/>
</dbReference>
<dbReference type="RefSeq" id="NP_000523.2">
    <molecule id="P05166-1"/>
    <property type="nucleotide sequence ID" value="NM_000532.5"/>
</dbReference>
<dbReference type="RefSeq" id="NP_001171485.1">
    <molecule id="P05166-2"/>
    <property type="nucleotide sequence ID" value="NM_001178014.2"/>
</dbReference>
<dbReference type="PDB" id="7YBU">
    <property type="method" value="EM"/>
    <property type="resolution" value="2.20 A"/>
    <property type="chains" value="C/E/G/I/K/P=1-539"/>
</dbReference>
<dbReference type="PDB" id="8XL3">
    <property type="method" value="EM"/>
    <property type="resolution" value="3.02 A"/>
    <property type="chains" value="B/D/F/H/J/L=1-539"/>
</dbReference>
<dbReference type="PDB" id="8XL4">
    <property type="method" value="EM"/>
    <property type="resolution" value="3.38 A"/>
    <property type="chains" value="B/D/F/H/J/L=1-539"/>
</dbReference>
<dbReference type="PDB" id="8XL5">
    <property type="method" value="EM"/>
    <property type="resolution" value="2.80 A"/>
    <property type="chains" value="B/D/F/H/J/L=1-539"/>
</dbReference>
<dbReference type="PDBsum" id="7YBU"/>
<dbReference type="PDBsum" id="8XL3"/>
<dbReference type="PDBsum" id="8XL4"/>
<dbReference type="PDBsum" id="8XL5"/>
<dbReference type="EMDB" id="EMD-33729"/>
<dbReference type="EMDB" id="EMD-38436"/>
<dbReference type="EMDB" id="EMD-38437"/>
<dbReference type="EMDB" id="EMD-38438"/>
<dbReference type="SMR" id="P05166"/>
<dbReference type="BioGRID" id="111129">
    <property type="interactions" value="201"/>
</dbReference>
<dbReference type="ComplexPortal" id="CPX-6169">
    <property type="entry name" value="Mitochondrial propionyl-CoA carboxylase complex"/>
</dbReference>
<dbReference type="CORUM" id="P05166"/>
<dbReference type="DIP" id="DIP-38244N"/>
<dbReference type="FunCoup" id="P05166">
    <property type="interactions" value="920"/>
</dbReference>
<dbReference type="IntAct" id="P05166">
    <property type="interactions" value="62"/>
</dbReference>
<dbReference type="MINT" id="P05166"/>
<dbReference type="STRING" id="9606.ENSP00000419027"/>
<dbReference type="DrugBank" id="DB00121">
    <property type="generic name" value="Biotin"/>
</dbReference>
<dbReference type="DrugBank" id="DB00161">
    <property type="generic name" value="Valine"/>
</dbReference>
<dbReference type="GlyGen" id="P05166">
    <property type="glycosylation" value="1 site, 1 O-linked glycan (1 site)"/>
</dbReference>
<dbReference type="iPTMnet" id="P05166"/>
<dbReference type="PhosphoSitePlus" id="P05166"/>
<dbReference type="SwissPalm" id="P05166"/>
<dbReference type="BioMuta" id="PCCB"/>
<dbReference type="DMDM" id="124106304"/>
<dbReference type="jPOST" id="P05166"/>
<dbReference type="MassIVE" id="P05166"/>
<dbReference type="PaxDb" id="9606-ENSP00000419027"/>
<dbReference type="PeptideAtlas" id="P05166"/>
<dbReference type="ProteomicsDB" id="51816">
    <molecule id="P05166-1"/>
</dbReference>
<dbReference type="ProteomicsDB" id="51817">
    <molecule id="P05166-2"/>
</dbReference>
<dbReference type="Pumba" id="P05166"/>
<dbReference type="Antibodypedia" id="33408">
    <property type="antibodies" value="211 antibodies from 31 providers"/>
</dbReference>
<dbReference type="DNASU" id="5096"/>
<dbReference type="Ensembl" id="ENST00000251654.9">
    <molecule id="P05166-1"/>
    <property type="protein sequence ID" value="ENSP00000251654.4"/>
    <property type="gene ID" value="ENSG00000114054.14"/>
</dbReference>
<dbReference type="Ensembl" id="ENST00000469217.5">
    <molecule id="P05166-2"/>
    <property type="protein sequence ID" value="ENSP00000419027.1"/>
    <property type="gene ID" value="ENSG00000114054.14"/>
</dbReference>
<dbReference type="GeneID" id="5096"/>
<dbReference type="KEGG" id="hsa:5096"/>
<dbReference type="MANE-Select" id="ENST00000251654.9">
    <property type="protein sequence ID" value="ENSP00000251654.4"/>
    <property type="RefSeq nucleotide sequence ID" value="NM_000532.5"/>
    <property type="RefSeq protein sequence ID" value="NP_000523.2"/>
</dbReference>
<dbReference type="UCSC" id="uc003eqy.3">
    <molecule id="P05166-1"/>
    <property type="organism name" value="human"/>
</dbReference>
<dbReference type="AGR" id="HGNC:8654"/>
<dbReference type="CTD" id="5096"/>
<dbReference type="DisGeNET" id="5096"/>
<dbReference type="GeneCards" id="PCCB"/>
<dbReference type="GeneReviews" id="PCCB"/>
<dbReference type="HGNC" id="HGNC:8654">
    <property type="gene designation" value="PCCB"/>
</dbReference>
<dbReference type="HPA" id="ENSG00000114054">
    <property type="expression patterns" value="Tissue enhanced (liver)"/>
</dbReference>
<dbReference type="MalaCards" id="PCCB"/>
<dbReference type="MIM" id="232050">
    <property type="type" value="gene"/>
</dbReference>
<dbReference type="MIM" id="606054">
    <property type="type" value="phenotype"/>
</dbReference>
<dbReference type="neXtProt" id="NX_P05166"/>
<dbReference type="OpenTargets" id="ENSG00000114054"/>
<dbReference type="Orphanet" id="35">
    <property type="disease" value="Propionic acidemia"/>
</dbReference>
<dbReference type="PharmGKB" id="PA32993"/>
<dbReference type="VEuPathDB" id="HostDB:ENSG00000114054"/>
<dbReference type="eggNOG" id="KOG0540">
    <property type="taxonomic scope" value="Eukaryota"/>
</dbReference>
<dbReference type="GeneTree" id="ENSGT00940000157741"/>
<dbReference type="InParanoid" id="P05166"/>
<dbReference type="OMA" id="ENTSYMF"/>
<dbReference type="OrthoDB" id="439921at2759"/>
<dbReference type="PAN-GO" id="P05166">
    <property type="GO annotations" value="2 GO annotations based on evolutionary models"/>
</dbReference>
<dbReference type="PhylomeDB" id="P05166"/>
<dbReference type="TreeFam" id="TF314350"/>
<dbReference type="BioCyc" id="MetaCyc:ENSG00000114054-MONOMER"/>
<dbReference type="BRENDA" id="6.4.1.3">
    <property type="organism ID" value="2681"/>
</dbReference>
<dbReference type="PathwayCommons" id="P05166"/>
<dbReference type="Reactome" id="R-HSA-196780">
    <property type="pathway name" value="Biotin transport and metabolism"/>
</dbReference>
<dbReference type="Reactome" id="R-HSA-3371599">
    <property type="pathway name" value="Defective HLCS causes multiple carboxylase deficiency"/>
</dbReference>
<dbReference type="Reactome" id="R-HSA-71032">
    <property type="pathway name" value="Propionyl-CoA catabolism"/>
</dbReference>
<dbReference type="Reactome" id="R-HSA-9837999">
    <property type="pathway name" value="Mitochondrial protein degradation"/>
</dbReference>
<dbReference type="SABIO-RK" id="P05166"/>
<dbReference type="SignaLink" id="P05166"/>
<dbReference type="SIGNOR" id="P05166"/>
<dbReference type="UniPathway" id="UPA00945">
    <property type="reaction ID" value="UER00908"/>
</dbReference>
<dbReference type="BioGRID-ORCS" id="5096">
    <property type="hits" value="13 hits in 1160 CRISPR screens"/>
</dbReference>
<dbReference type="ChiTaRS" id="PCCB">
    <property type="organism name" value="human"/>
</dbReference>
<dbReference type="GenomeRNAi" id="5096"/>
<dbReference type="Pharos" id="P05166">
    <property type="development level" value="Tbio"/>
</dbReference>
<dbReference type="PRO" id="PR:P05166"/>
<dbReference type="Proteomes" id="UP000005640">
    <property type="component" value="Chromosome 3"/>
</dbReference>
<dbReference type="RNAct" id="P05166">
    <property type="molecule type" value="protein"/>
</dbReference>
<dbReference type="Bgee" id="ENSG00000114054">
    <property type="expression patterns" value="Expressed in right adrenal gland cortex and 205 other cell types or tissues"/>
</dbReference>
<dbReference type="ExpressionAtlas" id="P05166">
    <property type="expression patterns" value="baseline and differential"/>
</dbReference>
<dbReference type="GO" id="GO:1902494">
    <property type="term" value="C:catalytic complex"/>
    <property type="evidence" value="ECO:0000353"/>
    <property type="project" value="ComplexPortal"/>
</dbReference>
<dbReference type="GO" id="GO:0005829">
    <property type="term" value="C:cytosol"/>
    <property type="evidence" value="ECO:0000304"/>
    <property type="project" value="Reactome"/>
</dbReference>
<dbReference type="GO" id="GO:0005759">
    <property type="term" value="C:mitochondrial matrix"/>
    <property type="evidence" value="ECO:0000314"/>
    <property type="project" value="UniProtKB"/>
</dbReference>
<dbReference type="GO" id="GO:0005739">
    <property type="term" value="C:mitochondrion"/>
    <property type="evidence" value="ECO:0006056"/>
    <property type="project" value="FlyBase"/>
</dbReference>
<dbReference type="GO" id="GO:0005524">
    <property type="term" value="F:ATP binding"/>
    <property type="evidence" value="ECO:0007669"/>
    <property type="project" value="UniProtKB-KW"/>
</dbReference>
<dbReference type="GO" id="GO:0004658">
    <property type="term" value="F:propionyl-CoA carboxylase activity"/>
    <property type="evidence" value="ECO:0000314"/>
    <property type="project" value="UniProtKB"/>
</dbReference>
<dbReference type="GO" id="GO:0009081">
    <property type="term" value="P:branched-chain amino acid metabolic process"/>
    <property type="evidence" value="ECO:0000303"/>
    <property type="project" value="ComplexPortal"/>
</dbReference>
<dbReference type="GO" id="GO:0006631">
    <property type="term" value="P:fatty acid metabolic process"/>
    <property type="evidence" value="ECO:0000303"/>
    <property type="project" value="ComplexPortal"/>
</dbReference>
<dbReference type="GO" id="GO:0019626">
    <property type="term" value="P:short-chain fatty acid catabolic process"/>
    <property type="evidence" value="ECO:0000305"/>
    <property type="project" value="UniProtKB"/>
</dbReference>
<dbReference type="FunFam" id="3.90.226.10:FF:000017">
    <property type="entry name" value="Propionyl-CoA carboxylase subunit beta 5"/>
    <property type="match status" value="1"/>
</dbReference>
<dbReference type="FunFam" id="3.90.226.10:FF:000016">
    <property type="entry name" value="Propionyl-CoA carboxylase, beta subunit"/>
    <property type="match status" value="1"/>
</dbReference>
<dbReference type="Gene3D" id="3.90.226.10">
    <property type="entry name" value="2-enoyl-CoA Hydratase, Chain A, domain 1"/>
    <property type="match status" value="2"/>
</dbReference>
<dbReference type="InterPro" id="IPR051047">
    <property type="entry name" value="AccD/PCCB"/>
</dbReference>
<dbReference type="InterPro" id="IPR034733">
    <property type="entry name" value="AcCoA_carboxyl_beta"/>
</dbReference>
<dbReference type="InterPro" id="IPR029045">
    <property type="entry name" value="ClpP/crotonase-like_dom_sf"/>
</dbReference>
<dbReference type="InterPro" id="IPR011763">
    <property type="entry name" value="COA_CT_C"/>
</dbReference>
<dbReference type="InterPro" id="IPR011762">
    <property type="entry name" value="COA_CT_N"/>
</dbReference>
<dbReference type="PANTHER" id="PTHR43842">
    <property type="entry name" value="PROPIONYL-COA CARBOXYLASE BETA CHAIN"/>
    <property type="match status" value="1"/>
</dbReference>
<dbReference type="PANTHER" id="PTHR43842:SF2">
    <property type="entry name" value="PROPIONYL-COA CARBOXYLASE BETA CHAIN, MITOCHONDRIAL"/>
    <property type="match status" value="1"/>
</dbReference>
<dbReference type="Pfam" id="PF01039">
    <property type="entry name" value="Carboxyl_trans"/>
    <property type="match status" value="1"/>
</dbReference>
<dbReference type="SUPFAM" id="SSF52096">
    <property type="entry name" value="ClpP/crotonase"/>
    <property type="match status" value="2"/>
</dbReference>
<dbReference type="PROSITE" id="PS50989">
    <property type="entry name" value="COA_CT_CTER"/>
    <property type="match status" value="1"/>
</dbReference>
<dbReference type="PROSITE" id="PS50980">
    <property type="entry name" value="COA_CT_NTER"/>
    <property type="match status" value="1"/>
</dbReference>
<gene>
    <name evidence="26" type="primary">PCCB</name>
</gene>
<sequence length="539" mass="58216">MAAALRVAAVGARLSVLASGLRAAVRSLCSQATSVNERIENKRRTALLGGGQRRIDAQHKRGKLTARERISLLLDPGSFVESDMFVEHRCADFGMAADKNKFPGDSVVTGRGRINGRLVYVFSQDFTVFGGSLSGAHAQKICKIMDQAITVGAPVIGLNDSGGARIQEGVESLAGYADIFLRNVTASGVIPQISLIMGPCAGGAVYSPALTDFTFMVKDTSYLFITGPDVVKSVTNEDVTQEELGGAKTHTTMSGVAHRAFENDVDALCNLRDFFNYLPLSSQDPAPVRECHDPSDRLVPELDTIVPLESTKAYNMVDIIHSVVDEREFFEIMPNYAKNIIVGFARMNGRTVGIVGNQPKVASGCLDINSSVKGARFVRFCDAFNIPLITFVDVPGFLPGTAQEYGGIIRHGAKLLYAFAEATVPKVTVITRKAYGGAYDVMSSKHLCGDTNYAWPTAEIAVMGAKGAVEIIFKGHENVEAAQAEYIEKFANPFPAAVRGFVDDIIQPSSTRARICCDLDVLASKKVQRPWRKHANIPL</sequence>
<reference key="1">
    <citation type="journal article" date="1994" name="Genomics">
        <title>Correction of the metabolic defect in propionic acidemia fibroblasts by microinjection of a full-length cDNA or RNA transcript encoding the propionyl-CoA carboxylase beta subunit.</title>
        <authorList>
            <person name="Lamhonwah A.-M."/>
            <person name="Leclerc D."/>
            <person name="Loyer M."/>
            <person name="Clarizio R."/>
            <person name="Gravel R.A."/>
        </authorList>
    </citation>
    <scope>NUCLEOTIDE SEQUENCE [MRNA] (ISOFORM 1)</scope>
    <scope>VARIANT SER-287</scope>
    <source>
        <tissue>Fibroblast</tissue>
        <tissue>Kidney</tissue>
        <tissue>Liver</tissue>
    </source>
</reference>
<reference key="2">
    <citation type="journal article" date="1993" name="Hum. Genet.">
        <title>The molecular defect in propionic acidemia: exon skipping caused by an 8-bp deletion from an intron in the PCCB allele.</title>
        <authorList>
            <person name="Ohura T."/>
            <person name="Ogasawara M."/>
            <person name="Ikeda H."/>
            <person name="Narisawa K."/>
            <person name="Tada K."/>
        </authorList>
    </citation>
    <scope>NUCLEOTIDE SEQUENCE [MRNA] (ISOFORM 1)</scope>
    <source>
        <tissue>Liver</tissue>
        <tissue>Placenta</tissue>
    </source>
</reference>
<reference key="3">
    <citation type="journal article" date="1998" name="Am. J. Hum. Genet.">
        <title>Human propionyl-CoA carboxylase beta subunit gene: exon-intron definition and mutation spectrum in Spanish and Latin American propionic acidemia patients.</title>
        <authorList>
            <person name="Rodriguez-Pombo P."/>
            <person name="Hoenicka J."/>
            <person name="Muro S."/>
            <person name="Perez B."/>
            <person name="Perez-Cerda C."/>
            <person name="Richard E."/>
            <person name="Desviat L.R."/>
            <person name="Ugarte M."/>
        </authorList>
    </citation>
    <scope>NUCLEOTIDE SEQUENCE [GENOMIC DNA]</scope>
    <scope>VARIANTS PA-2</scope>
    <scope>VARIANTS PA-2 PRO-44; ARG-106; ARG-131; TRP-165; LYS-168; ASP-198; TRP-410; VAL-497; CYS-512 AND PRO-519</scope>
    <source>
        <tissue>Blood</tissue>
        <tissue>Skin fibroblast</tissue>
    </source>
</reference>
<reference key="4">
    <citation type="journal article" date="2004" name="Nat. Genet.">
        <title>Complete sequencing and characterization of 21,243 full-length human cDNAs.</title>
        <authorList>
            <person name="Ota T."/>
            <person name="Suzuki Y."/>
            <person name="Nishikawa T."/>
            <person name="Otsuki T."/>
            <person name="Sugiyama T."/>
            <person name="Irie R."/>
            <person name="Wakamatsu A."/>
            <person name="Hayashi K."/>
            <person name="Sato H."/>
            <person name="Nagai K."/>
            <person name="Kimura K."/>
            <person name="Makita H."/>
            <person name="Sekine M."/>
            <person name="Obayashi M."/>
            <person name="Nishi T."/>
            <person name="Shibahara T."/>
            <person name="Tanaka T."/>
            <person name="Ishii S."/>
            <person name="Yamamoto J."/>
            <person name="Saito K."/>
            <person name="Kawai Y."/>
            <person name="Isono Y."/>
            <person name="Nakamura Y."/>
            <person name="Nagahari K."/>
            <person name="Murakami K."/>
            <person name="Yasuda T."/>
            <person name="Iwayanagi T."/>
            <person name="Wagatsuma M."/>
            <person name="Shiratori A."/>
            <person name="Sudo H."/>
            <person name="Hosoiri T."/>
            <person name="Kaku Y."/>
            <person name="Kodaira H."/>
            <person name="Kondo H."/>
            <person name="Sugawara M."/>
            <person name="Takahashi M."/>
            <person name="Kanda K."/>
            <person name="Yokoi T."/>
            <person name="Furuya T."/>
            <person name="Kikkawa E."/>
            <person name="Omura Y."/>
            <person name="Abe K."/>
            <person name="Kamihara K."/>
            <person name="Katsuta N."/>
            <person name="Sato K."/>
            <person name="Tanikawa M."/>
            <person name="Yamazaki M."/>
            <person name="Ninomiya K."/>
            <person name="Ishibashi T."/>
            <person name="Yamashita H."/>
            <person name="Murakawa K."/>
            <person name="Fujimori K."/>
            <person name="Tanai H."/>
            <person name="Kimata M."/>
            <person name="Watanabe M."/>
            <person name="Hiraoka S."/>
            <person name="Chiba Y."/>
            <person name="Ishida S."/>
            <person name="Ono Y."/>
            <person name="Takiguchi S."/>
            <person name="Watanabe S."/>
            <person name="Yosida M."/>
            <person name="Hotuta T."/>
            <person name="Kusano J."/>
            <person name="Kanehori K."/>
            <person name="Takahashi-Fujii A."/>
            <person name="Hara H."/>
            <person name="Tanase T.-O."/>
            <person name="Nomura Y."/>
            <person name="Togiya S."/>
            <person name="Komai F."/>
            <person name="Hara R."/>
            <person name="Takeuchi K."/>
            <person name="Arita M."/>
            <person name="Imose N."/>
            <person name="Musashino K."/>
            <person name="Yuuki H."/>
            <person name="Oshima A."/>
            <person name="Sasaki N."/>
            <person name="Aotsuka S."/>
            <person name="Yoshikawa Y."/>
            <person name="Matsunawa H."/>
            <person name="Ichihara T."/>
            <person name="Shiohata N."/>
            <person name="Sano S."/>
            <person name="Moriya S."/>
            <person name="Momiyama H."/>
            <person name="Satoh N."/>
            <person name="Takami S."/>
            <person name="Terashima Y."/>
            <person name="Suzuki O."/>
            <person name="Nakagawa S."/>
            <person name="Senoh A."/>
            <person name="Mizoguchi H."/>
            <person name="Goto Y."/>
            <person name="Shimizu F."/>
            <person name="Wakebe H."/>
            <person name="Hishigaki H."/>
            <person name="Watanabe T."/>
            <person name="Sugiyama A."/>
            <person name="Takemoto M."/>
            <person name="Kawakami B."/>
            <person name="Yamazaki M."/>
            <person name="Watanabe K."/>
            <person name="Kumagai A."/>
            <person name="Itakura S."/>
            <person name="Fukuzumi Y."/>
            <person name="Fujimori Y."/>
            <person name="Komiyama M."/>
            <person name="Tashiro H."/>
            <person name="Tanigami A."/>
            <person name="Fujiwara T."/>
            <person name="Ono T."/>
            <person name="Yamada K."/>
            <person name="Fujii Y."/>
            <person name="Ozaki K."/>
            <person name="Hirao M."/>
            <person name="Ohmori Y."/>
            <person name="Kawabata A."/>
            <person name="Hikiji T."/>
            <person name="Kobatake N."/>
            <person name="Inagaki H."/>
            <person name="Ikema Y."/>
            <person name="Okamoto S."/>
            <person name="Okitani R."/>
            <person name="Kawakami T."/>
            <person name="Noguchi S."/>
            <person name="Itoh T."/>
            <person name="Shigeta K."/>
            <person name="Senba T."/>
            <person name="Matsumura K."/>
            <person name="Nakajima Y."/>
            <person name="Mizuno T."/>
            <person name="Morinaga M."/>
            <person name="Sasaki M."/>
            <person name="Togashi T."/>
            <person name="Oyama M."/>
            <person name="Hata H."/>
            <person name="Watanabe M."/>
            <person name="Komatsu T."/>
            <person name="Mizushima-Sugano J."/>
            <person name="Satoh T."/>
            <person name="Shirai Y."/>
            <person name="Takahashi Y."/>
            <person name="Nakagawa K."/>
            <person name="Okumura K."/>
            <person name="Nagase T."/>
            <person name="Nomura N."/>
            <person name="Kikuchi H."/>
            <person name="Masuho Y."/>
            <person name="Yamashita R."/>
            <person name="Nakai K."/>
            <person name="Yada T."/>
            <person name="Nakamura Y."/>
            <person name="Ohara O."/>
            <person name="Isogai T."/>
            <person name="Sugano S."/>
        </authorList>
    </citation>
    <scope>NUCLEOTIDE SEQUENCE [LARGE SCALE MRNA] (ISOFORM 2)</scope>
    <source>
        <tissue>Caudate nucleus</tissue>
    </source>
</reference>
<reference key="5">
    <citation type="journal article" date="2006" name="Nature">
        <title>The DNA sequence, annotation and analysis of human chromosome 3.</title>
        <authorList>
            <person name="Muzny D.M."/>
            <person name="Scherer S.E."/>
            <person name="Kaul R."/>
            <person name="Wang J."/>
            <person name="Yu J."/>
            <person name="Sudbrak R."/>
            <person name="Buhay C.J."/>
            <person name="Chen R."/>
            <person name="Cree A."/>
            <person name="Ding Y."/>
            <person name="Dugan-Rocha S."/>
            <person name="Gill R."/>
            <person name="Gunaratne P."/>
            <person name="Harris R.A."/>
            <person name="Hawes A.C."/>
            <person name="Hernandez J."/>
            <person name="Hodgson A.V."/>
            <person name="Hume J."/>
            <person name="Jackson A."/>
            <person name="Khan Z.M."/>
            <person name="Kovar-Smith C."/>
            <person name="Lewis L.R."/>
            <person name="Lozado R.J."/>
            <person name="Metzker M.L."/>
            <person name="Milosavljevic A."/>
            <person name="Miner G.R."/>
            <person name="Morgan M.B."/>
            <person name="Nazareth L.V."/>
            <person name="Scott G."/>
            <person name="Sodergren E."/>
            <person name="Song X.-Z."/>
            <person name="Steffen D."/>
            <person name="Wei S."/>
            <person name="Wheeler D.A."/>
            <person name="Wright M.W."/>
            <person name="Worley K.C."/>
            <person name="Yuan Y."/>
            <person name="Zhang Z."/>
            <person name="Adams C.Q."/>
            <person name="Ansari-Lari M.A."/>
            <person name="Ayele M."/>
            <person name="Brown M.J."/>
            <person name="Chen G."/>
            <person name="Chen Z."/>
            <person name="Clendenning J."/>
            <person name="Clerc-Blankenburg K.P."/>
            <person name="Chen R."/>
            <person name="Chen Z."/>
            <person name="Davis C."/>
            <person name="Delgado O."/>
            <person name="Dinh H.H."/>
            <person name="Dong W."/>
            <person name="Draper H."/>
            <person name="Ernst S."/>
            <person name="Fu G."/>
            <person name="Gonzalez-Garay M.L."/>
            <person name="Garcia D.K."/>
            <person name="Gillett W."/>
            <person name="Gu J."/>
            <person name="Hao B."/>
            <person name="Haugen E."/>
            <person name="Havlak P."/>
            <person name="He X."/>
            <person name="Hennig S."/>
            <person name="Hu S."/>
            <person name="Huang W."/>
            <person name="Jackson L.R."/>
            <person name="Jacob L.S."/>
            <person name="Kelly S.H."/>
            <person name="Kube M."/>
            <person name="Levy R."/>
            <person name="Li Z."/>
            <person name="Liu B."/>
            <person name="Liu J."/>
            <person name="Liu W."/>
            <person name="Lu J."/>
            <person name="Maheshwari M."/>
            <person name="Nguyen B.-V."/>
            <person name="Okwuonu G.O."/>
            <person name="Palmeiri A."/>
            <person name="Pasternak S."/>
            <person name="Perez L.M."/>
            <person name="Phelps K.A."/>
            <person name="Plopper F.J."/>
            <person name="Qiang B."/>
            <person name="Raymond C."/>
            <person name="Rodriguez R."/>
            <person name="Saenphimmachak C."/>
            <person name="Santibanez J."/>
            <person name="Shen H."/>
            <person name="Shen Y."/>
            <person name="Subramanian S."/>
            <person name="Tabor P.E."/>
            <person name="Verduzco D."/>
            <person name="Waldron L."/>
            <person name="Wang J."/>
            <person name="Wang J."/>
            <person name="Wang Q."/>
            <person name="Williams G.A."/>
            <person name="Wong G.K.-S."/>
            <person name="Yao Z."/>
            <person name="Zhang J."/>
            <person name="Zhang X."/>
            <person name="Zhao G."/>
            <person name="Zhou J."/>
            <person name="Zhou Y."/>
            <person name="Nelson D."/>
            <person name="Lehrach H."/>
            <person name="Reinhardt R."/>
            <person name="Naylor S.L."/>
            <person name="Yang H."/>
            <person name="Olson M."/>
            <person name="Weinstock G."/>
            <person name="Gibbs R.A."/>
        </authorList>
    </citation>
    <scope>NUCLEOTIDE SEQUENCE [LARGE SCALE GENOMIC DNA]</scope>
</reference>
<reference key="6">
    <citation type="submission" date="2005-09" db="EMBL/GenBank/DDBJ databases">
        <authorList>
            <person name="Mural R.J."/>
            <person name="Istrail S."/>
            <person name="Sutton G."/>
            <person name="Florea L."/>
            <person name="Halpern A.L."/>
            <person name="Mobarry C.M."/>
            <person name="Lippert R."/>
            <person name="Walenz B."/>
            <person name="Shatkay H."/>
            <person name="Dew I."/>
            <person name="Miller J.R."/>
            <person name="Flanigan M.J."/>
            <person name="Edwards N.J."/>
            <person name="Bolanos R."/>
            <person name="Fasulo D."/>
            <person name="Halldorsson B.V."/>
            <person name="Hannenhalli S."/>
            <person name="Turner R."/>
            <person name="Yooseph S."/>
            <person name="Lu F."/>
            <person name="Nusskern D.R."/>
            <person name="Shue B.C."/>
            <person name="Zheng X.H."/>
            <person name="Zhong F."/>
            <person name="Delcher A.L."/>
            <person name="Huson D.H."/>
            <person name="Kravitz S.A."/>
            <person name="Mouchard L."/>
            <person name="Reinert K."/>
            <person name="Remington K.A."/>
            <person name="Clark A.G."/>
            <person name="Waterman M.S."/>
            <person name="Eichler E.E."/>
            <person name="Adams M.D."/>
            <person name="Hunkapiller M.W."/>
            <person name="Myers E.W."/>
            <person name="Venter J.C."/>
        </authorList>
    </citation>
    <scope>NUCLEOTIDE SEQUENCE [LARGE SCALE GENOMIC DNA]</scope>
</reference>
<reference key="7">
    <citation type="journal article" date="2004" name="Genome Res.">
        <title>The status, quality, and expansion of the NIH full-length cDNA project: the Mammalian Gene Collection (MGC).</title>
        <authorList>
            <consortium name="The MGC Project Team"/>
        </authorList>
    </citation>
    <scope>NUCLEOTIDE SEQUENCE [LARGE SCALE MRNA] (ISOFORM 1)</scope>
    <source>
        <tissue>Pancreas</tissue>
        <tissue>Skin</tissue>
    </source>
</reference>
<reference key="8">
    <citation type="journal article" date="1986" name="Proc. Natl. Acad. Sci. U.S.A.">
        <title>Isolation of cDNA clones coding for the alpha and beta chains of human propionyl-CoA carboxylase: chromosomal assignments and DNA polymorphisms associated with PCCA and PCCB genes.</title>
        <authorList>
            <person name="Lamhonwah A.-M."/>
            <person name="Barankiewicz T.J."/>
            <person name="Willard H.F."/>
            <person name="Mahuran D.J."/>
            <person name="Quan F."/>
            <person name="Gravel R.A."/>
        </authorList>
    </citation>
    <scope>NUCLEOTIDE SEQUENCE [MRNA] OF 289-443 (ISOFORM 1)</scope>
</reference>
<reference key="9">
    <citation type="journal article" date="2005" name="Biochem. Biophys. Res. Commun.">
        <title>Mitochondrial targeting signals and mature peptides of 3-methylcrotonyl-CoA carboxylase.</title>
        <authorList>
            <person name="Stadler S.C."/>
            <person name="Polanetz R."/>
            <person name="Meier S."/>
            <person name="Mayerhofer P.U."/>
            <person name="Herrmann J.M."/>
            <person name="Anslinger K."/>
            <person name="Roscher A.A."/>
            <person name="Roschinger W."/>
            <person name="Holzinger A."/>
        </authorList>
    </citation>
    <scope>PROTEIN SEQUENCE OF 29-33</scope>
    <scope>SUBCELLULAR LOCATION</scope>
    <source>
        <tissue>Kidney</tissue>
    </source>
</reference>
<reference key="10">
    <citation type="submission" date="1986-12" db="EMBL/GenBank/DDBJ databases">
        <authorList>
            <person name="Lamhonwah A.-M."/>
        </authorList>
    </citation>
    <scope>SEQUENCE REVISION</scope>
</reference>
<reference key="11">
    <citation type="journal article" date="1990" name="Proc. Natl. Acad. Sci. U.S.A.">
        <title>An unusual insertion/deletion in the gene encoding the beta-subunit of propionyl-CoA carboxylase is a frequent mutation in Caucasian propionic acidemia.</title>
        <authorList>
            <person name="Tahara T."/>
            <person name="Kraus J.P."/>
            <person name="Rosenberg L.E."/>
        </authorList>
    </citation>
    <scope>NUCLEOTIDE SEQUENCE [GENOMIC DNA] OF 401-433</scope>
    <scope>VARIANT PA-2 ILE-408 DEL</scope>
    <source>
        <tissue>Skin fibroblast</tissue>
    </source>
</reference>
<reference key="12">
    <citation type="journal article" date="1980" name="J. Biol. Chem.">
        <title>Isolation and characterization of propionyl-CoA carboxylase from normal human liver. Evidence for a protomeric tetramer of nonidentical subunits.</title>
        <authorList>
            <person name="Kalousek F."/>
            <person name="Darigo M.D."/>
            <person name="Rosenberg L.E."/>
        </authorList>
    </citation>
    <scope>FUNCTION</scope>
    <scope>CATALYTIC ACTIVITY</scope>
    <scope>PATHWAY</scope>
    <scope>BIOPHYSICOCHEMICAL PROPERTIES</scope>
    <scope>SUBUNIT</scope>
</reference>
<reference key="13">
    <citation type="journal article" date="2010" name="Nature">
        <title>Crystal structure of the alpha(6)beta(6) holoenzyme of propionyl-coenzyme A carboxylase.</title>
        <authorList>
            <person name="Huang C.S."/>
            <person name="Sadre-Bazzaz K."/>
            <person name="Shen Y."/>
            <person name="Deng B."/>
            <person name="Zhou Z.H."/>
            <person name="Tong L."/>
        </authorList>
    </citation>
    <scope>SUBUNIT</scope>
</reference>
<reference key="14">
    <citation type="journal article" date="2011" name="BMC Syst. Biol.">
        <title>Initial characterization of the human central proteome.</title>
        <authorList>
            <person name="Burkard T.R."/>
            <person name="Planyavsky M."/>
            <person name="Kaupe I."/>
            <person name="Breitwieser F.P."/>
            <person name="Buerckstuemmer T."/>
            <person name="Bennett K.L."/>
            <person name="Superti-Furga G."/>
            <person name="Colinge J."/>
        </authorList>
    </citation>
    <scope>IDENTIFICATION BY MASS SPECTROMETRY [LARGE SCALE ANALYSIS]</scope>
</reference>
<reference key="15">
    <citation type="journal article" date="2014" name="J. Proteomics">
        <title>An enzyme assisted RP-RPLC approach for in-depth analysis of human liver phosphoproteome.</title>
        <authorList>
            <person name="Bian Y."/>
            <person name="Song C."/>
            <person name="Cheng K."/>
            <person name="Dong M."/>
            <person name="Wang F."/>
            <person name="Huang J."/>
            <person name="Sun D."/>
            <person name="Wang L."/>
            <person name="Ye M."/>
            <person name="Zou H."/>
        </authorList>
    </citation>
    <scope>PHOSPHORYLATION [LARGE SCALE ANALYSIS] AT SER-71</scope>
    <scope>IDENTIFICATION BY MASS SPECTROMETRY [LARGE SCALE ANALYSIS]</scope>
    <source>
        <tissue>Liver</tissue>
    </source>
</reference>
<reference key="16">
    <citation type="journal article" date="1993" name="J. Inherit. Metab. Dis.">
        <title>Three independent mutations in the same exon of the PCCB gene: differences between Caucasian and Japanese propionic acidaemia.</title>
        <authorList>
            <person name="Tahara T."/>
            <person name="Kraus J.P."/>
            <person name="Ohura T."/>
            <person name="Rosenberg L.E."/>
            <person name="Fenton W.A."/>
        </authorList>
    </citation>
    <scope>VARIANTS PA-2 TRP-410 AND ILE-408 DEL</scope>
</reference>
<reference key="17">
    <citation type="journal article" date="1994" name="Am. J. Hum. Genet.">
        <title>Mutations participating in interallelic complementation in propionic acidemia.</title>
        <authorList>
            <person name="Gravel R.A."/>
            <person name="Akerman B.R."/>
            <person name="Lamhonwah A.M."/>
            <person name="Loyer M."/>
            <person name="Leon-del-Rio A."/>
            <person name="Italiano I."/>
        </authorList>
    </citation>
    <scope>VARIANTS PA-2 ILE-CYS-LYS-140 INS AND LEU-228</scope>
</reference>
<reference key="18">
    <citation type="journal article" date="1999" name="Hum. Mutat.">
        <title>Identification of novel mutations in the PCCB gene in European propionic acidemia patients.</title>
        <authorList>
            <person name="Muro S."/>
            <person name="Rodriguez-Pombo P."/>
            <person name="Perez B."/>
            <person name="Perez-Cerda C."/>
            <person name="Desviat L.R."/>
            <person name="Sperl W."/>
            <person name="Skladal D."/>
            <person name="Sass J.O."/>
            <person name="Ugarte M."/>
        </authorList>
    </citation>
    <scope>VARIANTS PA-2 MET-17; LYS-168; ASP-205 AND THR-442</scope>
</reference>
<reference key="19">
    <citation type="journal article" date="1999" name="Hum. Mutat.">
        <title>Overview of mutations in the PCCA and PCCB genes causing propionic acidemia.</title>
        <authorList>
            <person name="Ugarte M."/>
            <person name="Perez-Cerda C."/>
            <person name="Rodriguez-Pombo P."/>
            <person name="Desviat L.R."/>
            <person name="Perez B."/>
            <person name="Richard E."/>
            <person name="Muro S."/>
            <person name="Campeau E."/>
            <person name="Ohura T."/>
            <person name="Gravel R.A."/>
        </authorList>
    </citation>
    <scope>REVIEW ON PA VARIANTS</scope>
</reference>
<reference key="20">
    <citation type="journal article" date="2001" name="Mol. Genet. Metab.">
        <title>Effect of PCCB gene mutations on the heteromeric and homomeric assembly of propionyl-CoA carboxylase.</title>
        <authorList>
            <person name="Muro S."/>
            <person name="Perez B."/>
            <person name="Desviat L.R."/>
            <person name="Rodriguez-Pombo P."/>
            <person name="Perez-Cerda C."/>
            <person name="Clavero S."/>
            <person name="Ugarte M."/>
        </authorList>
    </citation>
    <scope>CHARACTERIZATION OF VARIANTS PA-2 GLN-165; VAL-497; CYS-512; PRO-519 AND ASP-536</scope>
    <scope>CHARACTERIZATION OF VARIANT VAL-497</scope>
</reference>
<reference key="21">
    <citation type="journal article" date="2002" name="Hum. Genet.">
        <title>Unexpectedly high prevalence of the mild form of propionic acidemia in Japan: presence of a common mutation and possible clinical implications.</title>
        <authorList>
            <person name="Yorifuji T."/>
            <person name="Kawai M."/>
            <person name="Muroi J."/>
            <person name="Mamada M."/>
            <person name="Kurokawa K."/>
            <person name="Shigematsu Y."/>
            <person name="Hirano S."/>
            <person name="Sakura N."/>
            <person name="Yoshida I."/>
            <person name="Kuhara T."/>
            <person name="Endo F."/>
            <person name="Mitsubuchi H."/>
            <person name="Nakahata T."/>
        </authorList>
    </citation>
    <scope>VARIANTS PA-2 ILE-428; LEU-430; CYS-435; CYS-439 AND THR-468</scope>
</reference>
<reference key="22">
    <citation type="journal article" date="2003" name="Mol. Genet. Metab.">
        <title>Propionic acidemia: identification of twenty-four novel mutations in Europe and North America.</title>
        <authorList>
            <person name="Perez B."/>
            <person name="Desviat L.R."/>
            <person name="Rodriguez-Pombo P."/>
            <person name="Clavero S."/>
            <person name="Navarrete R."/>
            <person name="Perez-Cerda C."/>
            <person name="Ugarte M."/>
        </authorList>
    </citation>
    <scope>VARIANTS PA-2 SER-67; MET-107; ASP-112; GLN-165; LYS-168; ARG-188; VAL-246; ILE-341 DEL AND TRP-410</scope>
</reference>
<reference key="23">
    <citation type="journal article" date="2004" name="Mol. Genet. Metab.">
        <title>Mutation spectrum of the PCCA and PCCB genes in Japanese patients with propionic acidemia.</title>
        <authorList>
            <person name="Yang X."/>
            <person name="Sakamoto O."/>
            <person name="Matsubara Y."/>
            <person name="Kure S."/>
            <person name="Suzuki Y."/>
            <person name="Aoki Y."/>
            <person name="Yamaguchi S."/>
            <person name="Takahashi Y."/>
            <person name="Nishikubo T."/>
            <person name="Kawaguchi C."/>
            <person name="Yoshioka A."/>
            <person name="Kimura T."/>
            <person name="Hayasaka K."/>
            <person name="Kohno Y."/>
            <person name="Iinuma K."/>
            <person name="Ohura T."/>
        </authorList>
    </citation>
    <scope>VARIANTS PA-2 PRO-153; TRP-165; TRP-410; ILE-428 AND CYS-512</scope>
</reference>
<reference key="24">
    <citation type="journal article" date="2005" name="J. Biol. Chem.">
        <title>Characterization of four variant forms of human propionyl-CoA carboxylase expressed in Escherichia coli.</title>
        <authorList>
            <person name="Jiang H."/>
            <person name="Rao K.S."/>
            <person name="Yee V.C."/>
            <person name="Kraus J.P."/>
        </authorList>
    </citation>
    <scope>CHARACTERIZATION OF VARIANTS PA-2 TRP-165; LYS-168 AND TRP-410 AND CYS-512</scope>
    <scope>CHARACTERIZATION OF VARIANT VAL-497</scope>
    <scope>FUNCTION</scope>
    <scope>CATALYTIC ACTIVITY</scope>
    <scope>BIOPHYSICOCHEMICAL PROPERTIES</scope>
    <scope>PATHWAY</scope>
</reference>
<evidence type="ECO:0000250" key="1">
    <source>
        <dbReference type="UniProtKB" id="P79384"/>
    </source>
</evidence>
<evidence type="ECO:0000250" key="2">
    <source>
        <dbReference type="UniProtKB" id="Q168G2"/>
    </source>
</evidence>
<evidence type="ECO:0000250" key="3">
    <source>
        <dbReference type="UniProtKB" id="Q99MN9"/>
    </source>
</evidence>
<evidence type="ECO:0000255" key="4"/>
<evidence type="ECO:0000255" key="5">
    <source>
        <dbReference type="PROSITE-ProRule" id="PRU01136"/>
    </source>
</evidence>
<evidence type="ECO:0000255" key="6">
    <source>
        <dbReference type="PROSITE-ProRule" id="PRU01137"/>
    </source>
</evidence>
<evidence type="ECO:0000255" key="7">
    <source>
        <dbReference type="PROSITE-ProRule" id="PRU01138"/>
    </source>
</evidence>
<evidence type="ECO:0000269" key="8">
    <source>
    </source>
</evidence>
<evidence type="ECO:0000269" key="9">
    <source>
    </source>
</evidence>
<evidence type="ECO:0000269" key="10">
    <source>
    </source>
</evidence>
<evidence type="ECO:0000269" key="11">
    <source>
    </source>
</evidence>
<evidence type="ECO:0000269" key="12">
    <source>
    </source>
</evidence>
<evidence type="ECO:0000269" key="13">
    <source>
    </source>
</evidence>
<evidence type="ECO:0000269" key="14">
    <source>
    </source>
</evidence>
<evidence type="ECO:0000269" key="15">
    <source>
    </source>
</evidence>
<evidence type="ECO:0000269" key="16">
    <source>
    </source>
</evidence>
<evidence type="ECO:0000269" key="17">
    <source>
    </source>
</evidence>
<evidence type="ECO:0000269" key="18">
    <source>
    </source>
</evidence>
<evidence type="ECO:0000269" key="19">
    <source>
    </source>
</evidence>
<evidence type="ECO:0000269" key="20">
    <source>
    </source>
</evidence>
<evidence type="ECO:0000269" key="21">
    <source>
    </source>
</evidence>
<evidence type="ECO:0000303" key="22">
    <source>
    </source>
</evidence>
<evidence type="ECO:0000305" key="23"/>
<evidence type="ECO:0000305" key="24">
    <source>
    </source>
</evidence>
<evidence type="ECO:0000305" key="25">
    <source>
    </source>
</evidence>
<evidence type="ECO:0000312" key="26">
    <source>
        <dbReference type="HGNC" id="HGNC:8654"/>
    </source>
</evidence>
<evidence type="ECO:0007744" key="27">
    <source>
    </source>
</evidence>
<evidence type="ECO:0007829" key="28">
    <source>
        <dbReference type="PDB" id="7YBU"/>
    </source>
</evidence>
<evidence type="ECO:0007829" key="29">
    <source>
        <dbReference type="PDB" id="8XL3"/>
    </source>
</evidence>
<organism>
    <name type="scientific">Homo sapiens</name>
    <name type="common">Human</name>
    <dbReference type="NCBI Taxonomy" id="9606"/>
    <lineage>
        <taxon>Eukaryota</taxon>
        <taxon>Metazoa</taxon>
        <taxon>Chordata</taxon>
        <taxon>Craniata</taxon>
        <taxon>Vertebrata</taxon>
        <taxon>Euteleostomi</taxon>
        <taxon>Mammalia</taxon>
        <taxon>Eutheria</taxon>
        <taxon>Euarchontoglires</taxon>
        <taxon>Primates</taxon>
        <taxon>Haplorrhini</taxon>
        <taxon>Catarrhini</taxon>
        <taxon>Hominidae</taxon>
        <taxon>Homo</taxon>
    </lineage>
</organism>
<comment type="function">
    <text evidence="1 2 13 17">This is one of the 2 subunits of the biotin-dependent propionyl-CoA carboxylase (PCC), a mitochondrial enzyme involved in the catabolism of odd chain fatty acids, branched-chain amino acids isoleucine, threonine, methionine, and valine and other metabolites (PubMed:15890657, PubMed:6765947). Propionyl-CoA carboxylase catalyzes the carboxylation of propionyl-CoA/propanoyl-CoA to D-methylmalonyl-CoA/(S)-methylmalonyl-CoA (PubMed:15890657, PubMed:6765947). Within the holoenzyme, the alpha subunit catalyzes the ATP-dependent carboxylation of the biotin carried by the biotin carboxyl carrier (BCC) domain, while the beta subunit then transfers the carboxyl group from carboxylated biotin to propionyl-CoA (By similarity). Propionyl-CoA carboxylase also significantly acts on butyryl-CoA/butanoyl-CoA, which is converted to ethylmalonyl-CoA/(2S)-ethylmalonyl-CoA at a much lower rate (PubMed:6765947). Other alternative minor substrates include (2E)-butenoyl-CoA/crotonoyl-CoA (By similarity).</text>
</comment>
<comment type="catalytic activity">
    <reaction evidence="13 17">
        <text>propanoyl-CoA + hydrogencarbonate + ATP = (S)-methylmalonyl-CoA + ADP + phosphate + H(+)</text>
        <dbReference type="Rhea" id="RHEA:23720"/>
        <dbReference type="ChEBI" id="CHEBI:15378"/>
        <dbReference type="ChEBI" id="CHEBI:17544"/>
        <dbReference type="ChEBI" id="CHEBI:30616"/>
        <dbReference type="ChEBI" id="CHEBI:43474"/>
        <dbReference type="ChEBI" id="CHEBI:57327"/>
        <dbReference type="ChEBI" id="CHEBI:57392"/>
        <dbReference type="ChEBI" id="CHEBI:456216"/>
        <dbReference type="EC" id="6.4.1.3"/>
    </reaction>
    <physiologicalReaction direction="left-to-right" evidence="13 17">
        <dbReference type="Rhea" id="RHEA:23721"/>
    </physiologicalReaction>
</comment>
<comment type="catalytic activity">
    <reaction evidence="1">
        <text>butanoyl-CoA + hydrogencarbonate + ATP = (2S)-ethylmalonyl-CoA + ADP + phosphate + H(+)</text>
        <dbReference type="Rhea" id="RHEA:59520"/>
        <dbReference type="ChEBI" id="CHEBI:15378"/>
        <dbReference type="ChEBI" id="CHEBI:17544"/>
        <dbReference type="ChEBI" id="CHEBI:30616"/>
        <dbReference type="ChEBI" id="CHEBI:43474"/>
        <dbReference type="ChEBI" id="CHEBI:57371"/>
        <dbReference type="ChEBI" id="CHEBI:60909"/>
        <dbReference type="ChEBI" id="CHEBI:456216"/>
    </reaction>
    <physiologicalReaction direction="left-to-right" evidence="1">
        <dbReference type="Rhea" id="RHEA:59521"/>
    </physiologicalReaction>
</comment>
<comment type="biophysicochemical properties">
    <kinetics>
        <KM evidence="17">0.29 mM for propanoyl-CoA</KM>
        <KM evidence="13">0.41 mM for propanoyl-CoA (at 37 degrees Celsius and pH 8.0)</KM>
    </kinetics>
    <phDependence>
        <text evidence="17">Optimum pH is 7.2-8.8 for the propionyl-CoA carboxylase activity as measured for the holoenzyme.</text>
    </phDependence>
</comment>
<comment type="pathway">
    <text evidence="13 17">Metabolic intermediate metabolism; propanoyl-CoA degradation; succinyl-CoA from propanoyl-CoA: step 1/3.</text>
</comment>
<comment type="subunit">
    <text evidence="15 17">The holoenzyme is a dodecamer composed of 6 PCCA/alpha subunits and 6 PCCB/beta subunits.</text>
</comment>
<comment type="interaction">
    <interactant intactId="EBI-1371908">
        <id>P05166</id>
    </interactant>
    <interactant intactId="EBI-2880652">
        <id>Q08043</id>
        <label>ACTN3</label>
    </interactant>
    <organismsDiffer>false</organismsDiffer>
    <experiments>3</experiments>
</comment>
<comment type="interaction">
    <interactant intactId="EBI-1371908">
        <id>P05166</id>
    </interactant>
    <interactant intactId="EBI-2211679">
        <id>P05165</id>
        <label>PCCA</label>
    </interactant>
    <organismsDiffer>false</organismsDiffer>
    <experiments>5</experiments>
</comment>
<comment type="subcellular location">
    <subcellularLocation>
        <location evidence="24">Mitochondrion matrix</location>
    </subcellularLocation>
</comment>
<comment type="alternative products">
    <event type="alternative splicing"/>
    <isoform>
        <id>P05166-1</id>
        <name>1</name>
        <sequence type="displayed"/>
    </isoform>
    <isoform>
        <id>P05166-2</id>
        <name>2</name>
        <sequence type="described" ref="VSP_042568"/>
    </isoform>
</comment>
<comment type="domain">
    <text evidence="2">The beta subunit contains the carboxyl transferase (CT) domain.</text>
</comment>
<comment type="disease" evidence="8 9 10 11 12 13 16 18 20 21">
    <disease id="DI-02222">
        <name>Propionic acidemia type II</name>
        <acronym>PA-2</acronym>
        <description>Life-threatening disease characterized by episodic vomiting, lethargy and ketosis, neutropenia, periodic thrombocytopenia, hypogammaglobulinemia, developmental retardation, and intolerance to protein.</description>
        <dbReference type="MIM" id="606054"/>
    </disease>
    <text>The disease is caused by variants affecting the gene represented in this entry.</text>
</comment>
<comment type="similarity">
    <text evidence="23">Belongs to the AccD/PCCB family.</text>
</comment>